<accession>B4ER97</accession>
<dbReference type="EC" id="2.3.1.290" evidence="8"/>
<dbReference type="EMBL" id="AM778535">
    <property type="protein sequence ID" value="CAO85898.1"/>
    <property type="molecule type" value="Genomic_DNA"/>
</dbReference>
<dbReference type="KEGG" id="ag:CAO85898"/>
<dbReference type="BioCyc" id="MetaCyc:MONOMER-20717"/>
<dbReference type="BRENDA" id="2.3.1.290">
    <property type="organism ID" value="16282"/>
</dbReference>
<dbReference type="GO" id="GO:0004315">
    <property type="term" value="F:3-oxoacyl-[acyl-carrier-protein] synthase activity"/>
    <property type="evidence" value="ECO:0007669"/>
    <property type="project" value="InterPro"/>
</dbReference>
<dbReference type="GO" id="GO:0004312">
    <property type="term" value="F:fatty acid synthase activity"/>
    <property type="evidence" value="ECO:0007669"/>
    <property type="project" value="TreeGrafter"/>
</dbReference>
<dbReference type="GO" id="GO:0031177">
    <property type="term" value="F:phosphopantetheine binding"/>
    <property type="evidence" value="ECO:0007669"/>
    <property type="project" value="InterPro"/>
</dbReference>
<dbReference type="GO" id="GO:0006633">
    <property type="term" value="P:fatty acid biosynthetic process"/>
    <property type="evidence" value="ECO:0007669"/>
    <property type="project" value="InterPro"/>
</dbReference>
<dbReference type="GO" id="GO:0033068">
    <property type="term" value="P:macrolide biosynthetic process"/>
    <property type="evidence" value="ECO:0007669"/>
    <property type="project" value="UniProtKB-ARBA"/>
</dbReference>
<dbReference type="CDD" id="cd00833">
    <property type="entry name" value="PKS"/>
    <property type="match status" value="2"/>
</dbReference>
<dbReference type="FunFam" id="3.40.47.10:FF:000019">
    <property type="entry name" value="Polyketide synthase type I"/>
    <property type="match status" value="1"/>
</dbReference>
<dbReference type="FunFam" id="3.40.366.10:FF:000002">
    <property type="entry name" value="Probable polyketide synthase 2"/>
    <property type="match status" value="1"/>
</dbReference>
<dbReference type="FunFam" id="1.10.1200.10:FF:000007">
    <property type="entry name" value="Probable polyketide synthase pks17"/>
    <property type="match status" value="2"/>
</dbReference>
<dbReference type="Gene3D" id="3.30.70.3290">
    <property type="match status" value="2"/>
</dbReference>
<dbReference type="Gene3D" id="3.40.47.10">
    <property type="match status" value="2"/>
</dbReference>
<dbReference type="Gene3D" id="1.10.1200.10">
    <property type="entry name" value="ACP-like"/>
    <property type="match status" value="2"/>
</dbReference>
<dbReference type="Gene3D" id="3.40.50.1820">
    <property type="entry name" value="alpha/beta hydrolase"/>
    <property type="match status" value="1"/>
</dbReference>
<dbReference type="Gene3D" id="3.40.366.10">
    <property type="entry name" value="Malonyl-Coenzyme A Acyl Carrier Protein, domain 2"/>
    <property type="match status" value="2"/>
</dbReference>
<dbReference type="InterPro" id="IPR029058">
    <property type="entry name" value="AB_hydrolase_fold"/>
</dbReference>
<dbReference type="InterPro" id="IPR001227">
    <property type="entry name" value="Ac_transferase_dom_sf"/>
</dbReference>
<dbReference type="InterPro" id="IPR036736">
    <property type="entry name" value="ACP-like_sf"/>
</dbReference>
<dbReference type="InterPro" id="IPR014043">
    <property type="entry name" value="Acyl_transferase_dom"/>
</dbReference>
<dbReference type="InterPro" id="IPR016035">
    <property type="entry name" value="Acyl_Trfase/lysoPLipase"/>
</dbReference>
<dbReference type="InterPro" id="IPR018201">
    <property type="entry name" value="Ketoacyl_synth_AS"/>
</dbReference>
<dbReference type="InterPro" id="IPR014031">
    <property type="entry name" value="Ketoacyl_synth_C"/>
</dbReference>
<dbReference type="InterPro" id="IPR014030">
    <property type="entry name" value="Ketoacyl_synth_N"/>
</dbReference>
<dbReference type="InterPro" id="IPR016036">
    <property type="entry name" value="Malonyl_transacylase_ACP-bd"/>
</dbReference>
<dbReference type="InterPro" id="IPR015083">
    <property type="entry name" value="NorB/c/GfsB-D-like_docking"/>
</dbReference>
<dbReference type="InterPro" id="IPR032821">
    <property type="entry name" value="PKS_assoc"/>
</dbReference>
<dbReference type="InterPro" id="IPR020841">
    <property type="entry name" value="PKS_Beta-ketoAc_synthase_dom"/>
</dbReference>
<dbReference type="InterPro" id="IPR050091">
    <property type="entry name" value="PKS_NRPS_Biosynth_Enz"/>
</dbReference>
<dbReference type="InterPro" id="IPR020806">
    <property type="entry name" value="PKS_PP-bd"/>
</dbReference>
<dbReference type="InterPro" id="IPR020802">
    <property type="entry name" value="PKS_thioesterase"/>
</dbReference>
<dbReference type="InterPro" id="IPR036299">
    <property type="entry name" value="Polyketide_synth_docking_sf"/>
</dbReference>
<dbReference type="InterPro" id="IPR009081">
    <property type="entry name" value="PP-bd_ACP"/>
</dbReference>
<dbReference type="InterPro" id="IPR006162">
    <property type="entry name" value="Ppantetheine_attach_site"/>
</dbReference>
<dbReference type="InterPro" id="IPR001031">
    <property type="entry name" value="Thioesterase"/>
</dbReference>
<dbReference type="InterPro" id="IPR016039">
    <property type="entry name" value="Thiolase-like"/>
</dbReference>
<dbReference type="PANTHER" id="PTHR43775">
    <property type="entry name" value="FATTY ACID SYNTHASE"/>
    <property type="match status" value="1"/>
</dbReference>
<dbReference type="PANTHER" id="PTHR43775:SF51">
    <property type="entry name" value="INACTIVE PHENOLPHTHIOCEROL SYNTHESIS POLYKETIDE SYNTHASE TYPE I PKS1-RELATED"/>
    <property type="match status" value="1"/>
</dbReference>
<dbReference type="Pfam" id="PF00698">
    <property type="entry name" value="Acyl_transf_1"/>
    <property type="match status" value="1"/>
</dbReference>
<dbReference type="Pfam" id="PF08990">
    <property type="entry name" value="Docking"/>
    <property type="match status" value="1"/>
</dbReference>
<dbReference type="Pfam" id="PF16197">
    <property type="entry name" value="KAsynt_C_assoc"/>
    <property type="match status" value="1"/>
</dbReference>
<dbReference type="Pfam" id="PF00109">
    <property type="entry name" value="ketoacyl-synt"/>
    <property type="match status" value="2"/>
</dbReference>
<dbReference type="Pfam" id="PF02801">
    <property type="entry name" value="Ketoacyl-synt_C"/>
    <property type="match status" value="2"/>
</dbReference>
<dbReference type="Pfam" id="PF00550">
    <property type="entry name" value="PP-binding"/>
    <property type="match status" value="2"/>
</dbReference>
<dbReference type="Pfam" id="PF00975">
    <property type="entry name" value="Thioesterase"/>
    <property type="match status" value="1"/>
</dbReference>
<dbReference type="SMART" id="SM00827">
    <property type="entry name" value="PKS_AT"/>
    <property type="match status" value="1"/>
</dbReference>
<dbReference type="SMART" id="SM00825">
    <property type="entry name" value="PKS_KS"/>
    <property type="match status" value="2"/>
</dbReference>
<dbReference type="SMART" id="SM00823">
    <property type="entry name" value="PKS_PP"/>
    <property type="match status" value="2"/>
</dbReference>
<dbReference type="SMART" id="SM01294">
    <property type="entry name" value="PKS_PP_betabranch"/>
    <property type="match status" value="1"/>
</dbReference>
<dbReference type="SMART" id="SM00824">
    <property type="entry name" value="PKS_TE"/>
    <property type="match status" value="1"/>
</dbReference>
<dbReference type="SUPFAM" id="SSF47336">
    <property type="entry name" value="ACP-like"/>
    <property type="match status" value="1"/>
</dbReference>
<dbReference type="SUPFAM" id="SSF53474">
    <property type="entry name" value="alpha/beta-Hydrolases"/>
    <property type="match status" value="1"/>
</dbReference>
<dbReference type="SUPFAM" id="SSF101173">
    <property type="entry name" value="Docking domain B of the erythromycin polyketide synthase (DEBS)"/>
    <property type="match status" value="1"/>
</dbReference>
<dbReference type="SUPFAM" id="SSF52151">
    <property type="entry name" value="FabD/lysophospholipase-like"/>
    <property type="match status" value="2"/>
</dbReference>
<dbReference type="SUPFAM" id="SSF55048">
    <property type="entry name" value="Probable ACP-binding domain of malonyl-CoA ACP transacylase"/>
    <property type="match status" value="1"/>
</dbReference>
<dbReference type="SUPFAM" id="SSF53901">
    <property type="entry name" value="Thiolase-like"/>
    <property type="match status" value="3"/>
</dbReference>
<dbReference type="PROSITE" id="PS50075">
    <property type="entry name" value="CARRIER"/>
    <property type="match status" value="2"/>
</dbReference>
<dbReference type="PROSITE" id="PS00606">
    <property type="entry name" value="KS3_1"/>
    <property type="match status" value="1"/>
</dbReference>
<dbReference type="PROSITE" id="PS52004">
    <property type="entry name" value="KS3_2"/>
    <property type="match status" value="2"/>
</dbReference>
<dbReference type="PROSITE" id="PS00012">
    <property type="entry name" value="PHOSPHOPANTETHEINE"/>
    <property type="match status" value="1"/>
</dbReference>
<organism>
    <name type="scientific">Streptomyces orinoci</name>
    <name type="common">Streptoverticillium orinoci</name>
    <dbReference type="NCBI Taxonomy" id="67339"/>
    <lineage>
        <taxon>Bacteria</taxon>
        <taxon>Bacillati</taxon>
        <taxon>Actinomycetota</taxon>
        <taxon>Actinomycetes</taxon>
        <taxon>Kitasatosporales</taxon>
        <taxon>Streptomycetaceae</taxon>
        <taxon>Streptomyces</taxon>
    </lineage>
</organism>
<gene>
    <name evidence="6" type="primary">norC</name>
</gene>
<name>NORC_STRON</name>
<comment type="function">
    <text evidence="5">Component of a type I modular polyketide synthase (PKS) that generates the backbone of the antibiotic spectinabilin (also known as neoaureothin), a nitroaryl-substituted polyketide metabolite (PubMed:17763486). This PKS system accepts the unusual starter unit 4-nitrobenzoyl-CoA and extends it by 6 molecules of (S)-methylmalonyl-CoA and a single molecule of malonyl-CoA (PubMed:17763486).</text>
</comment>
<comment type="catalytic activity">
    <reaction evidence="8">
        <text>4-nitrobenzoyl-CoA + 6 (S)-methylmalonyl-CoA + malonyl-CoA + 6 NADPH + 12 H(+) = demethyldeoxyspectinabilin + 7 CO2 + 6 NADP(+) + 8 CoA + 5 H2O</text>
        <dbReference type="Rhea" id="RHEA:58944"/>
        <dbReference type="ChEBI" id="CHEBI:15377"/>
        <dbReference type="ChEBI" id="CHEBI:15378"/>
        <dbReference type="ChEBI" id="CHEBI:16526"/>
        <dbReference type="ChEBI" id="CHEBI:57287"/>
        <dbReference type="ChEBI" id="CHEBI:57327"/>
        <dbReference type="ChEBI" id="CHEBI:57384"/>
        <dbReference type="ChEBI" id="CHEBI:57783"/>
        <dbReference type="ChEBI" id="CHEBI:58349"/>
        <dbReference type="ChEBI" id="CHEBI:142871"/>
        <dbReference type="ChEBI" id="CHEBI:142872"/>
        <dbReference type="EC" id="2.3.1.290"/>
    </reaction>
    <physiologicalReaction direction="left-to-right" evidence="8">
        <dbReference type="Rhea" id="RHEA:58945"/>
    </physiologicalReaction>
</comment>
<comment type="cofactor">
    <cofactor evidence="2">
        <name>pantetheine 4'-phosphate</name>
        <dbReference type="ChEBI" id="CHEBI:47942"/>
    </cofactor>
</comment>
<comment type="pathway">
    <text evidence="8">Antibiotic biosynthesis.</text>
</comment>
<comment type="pathway">
    <text evidence="8">Polyketide biosynthesis.</text>
</comment>
<comment type="subunit">
    <text evidence="5">The spectinabilin polyketide synthase complex is composed of 4 proteins, NorA, NorA', NorB and NorC (PubMed:17763486). The complex comprises 6 modules with a total of 28 catalytic domains catalyzing 7 chain elongations (PubMed:17763486). NorA comprises one module, NorA' two modules, NorB one module and NorC two modules (PubMed:17763486).</text>
</comment>
<sequence length="2266" mass="238206">MTSGRGVSQMVTDDKLRYFLKKVTADLHETRGRLRELEEAAGEPIAVVAMGCRFPGGVRSPEDLWHLVASGRDAITPFPADRGWETAGLYDPDPDRPGKSCAREGGFLDDVASFDAGLFGVSPREALALDPQQRLLLEVTWETFERAGLTPAALRGTRTGVFVGTSSQEYAMLVHNARENFEGYSTGYLASVISGRLAYNFGLQGPAVTVDTACSSSLVALHQAAQALRAGDCTLALAGGVAVLATPSMFVEFSRQRGLAPDGRCKAFAAAADGTGWGEGVGLLLLERLSEARREGHPVLAVVRGSAVNQDGASNGLTAPNGPAQQRVIRRALAACRAVGGPGGRGGGPWHRDPAGRSHRGPGAAGHLRPRASRPTSFVARVVEVQYRPHPGRRRRRRCDQDGDGPAPRRTAAHPAYRRPHSTGGLVGGHRAAAHRGEGVAGDRPTPPGRRVLLRHQRHQRPCGAGTSRAGRLPRPRRTAGTAPGGDTAAALGALRPHRARPAGTGRPAARPYPRPPAPLPADTAHSLLVSRTLFGHRAVVLGDDRDELLTGLDALAGGGNAPGVLTGVAGEPRKPVLVFPGQGAQWEGMAAELYRESAVFRDRLRQCAEALAPHTGFSLVDVVCGAEGAAALDRVDVVQPALWAMLVSLAALWRSHGVEPGAVVGHSQGEIAAACVAGALSLEDGARIVALRSRLIAERLSGRGGMAFLGLPAGRAREWLAAWETRLGVAAVNGPSSVVVSGDAEALDGMLAAAEEEGVRAIRVAVDYASHSAQVATLEDELLAALPGITPRTAEIPFFSTVNGALIDTSALDPAYWYRNLRQTVRFESTVRRLLEAGHRGFVEVSPHPVLAVSVQEILDATATEGVVLASLRRGEGGLRRFLTSVGEAHVHGIPADFALPPGRLVDLPTLAFERRRYWLDAQPAAPAHQAEGSAGESAGESAGESAEESEAALFRQRLAGLPESERERAVLHTVCEQAAVVLNLTSAADLDTGKAFTDLGFVSMTAMELRNRLATATGIRLTPTAAFDHPTPEKLAAHLLSRLTGTAEPIAQPVAAPPAAGEPIAIVAMGCRYPGEVASPEELWELLAAGRDATSSFPANRGWNTDELYDPNPGRPGRTYVRRGGFLHDADQFDPQLFGISPREALAMDPQQRLLLEVAWEVLERARLSPASVRGSRTGVFMGISGQDYLPVLTASPDGGAGHLMTGTSTSVASGRIAYTFGLRGPAVTVDTACSSSLVALHLAIQALRQGDCSAALVGGATVLSTPGAFVEFSQQRALAPDGRCKAFAAGADGTGWGEGAGMLLVEPLSEARRQGHPVLALIRGSATNQDGASNGLSAPNGQAQQQVIRQALANSGLTTRDVDAVEAHGTGTALGDPIEAEALLATYGQDRPAQRPLWLGSLKSNIGHTAAAAGVGGVIKMVLALRRGVLPPTLHAADPTPHVDWSAGAVELLTEAREWPETGRPRRAGVSAFGISGTNAHVVLEQAPDPDPAPGSGLPHPAATLPAVPWPLSGRTAAALRAQAGRLHRFVLAHPGLAPADIGRSLAAGRAGLEHRAVVLGRDRDQLLAELATLAEGEGDDAGAAVRGTVRARSRMACLFTAGPGARSGPGRELYARMPVYAAAVDEAGAAFQALPARPLGETMALDEAPADPVLAQVLHFAEQVALFRLLDHWGTAPSHLLGHGPGEAAAAHCAGVLSLSDAAALLPALRATEDDIRRTVKELTFHPPRIPLVSGRTGRPLTPGELRSPEHWIALARETGTPAEGLRWLLADGVHHCLLPVPVDTAGIPGDLAEDGLLLLPDPSRDGTGATALLRALARLYVRGVAVGWDRMLADCGARLVELPTYAFQRGRYWPELAALPAAGPRPAGRADGQGGREFQERLAGASEEEREALLAALVRTHAAAALRLPDADAIDERTPLPELGFDSLTAVDLRNRLGADTGLRLAPSLVFQHPTVTALARHLLAAWTAAGGADRAAEDTTGAGTTLGPLLARAGELGRSEEFQELMHRMAAFRPAFDTPRAEHRIPPVRLSRGPAAPGLVCFPTFAGSSGPQQYARLAAAARGERDLWVLPAPGFSWDQPLPASVDALARLQADGVQECAEGQPVVLLGYSAGGWIAHATAAALEARGAGPSGVVLLDTYWPDSAMLPRLHARIDQDRKSGSSEAHWTEEIRDDAGLTAMAHYSRLFQTWRPAPITAPTLLVRAAEPAVAEPPRDWRPHWRLPHTAVDAPGTHFTLIREHGPAALGSVHHWLNGLQKKEH</sequence>
<evidence type="ECO:0000255" key="1"/>
<evidence type="ECO:0000255" key="2">
    <source>
        <dbReference type="PROSITE-ProRule" id="PRU00258"/>
    </source>
</evidence>
<evidence type="ECO:0000255" key="3">
    <source>
        <dbReference type="PROSITE-ProRule" id="PRU01348"/>
    </source>
</evidence>
<evidence type="ECO:0000256" key="4">
    <source>
        <dbReference type="SAM" id="MobiDB-lite"/>
    </source>
</evidence>
<evidence type="ECO:0000269" key="5">
    <source>
    </source>
</evidence>
<evidence type="ECO:0000303" key="6">
    <source>
    </source>
</evidence>
<evidence type="ECO:0000305" key="7"/>
<evidence type="ECO:0000305" key="8">
    <source>
    </source>
</evidence>
<evidence type="ECO:0000312" key="9">
    <source>
        <dbReference type="EMBL" id="CAO85898.1"/>
    </source>
</evidence>
<keyword id="KW-0012">Acyltransferase</keyword>
<keyword id="KW-0045">Antibiotic biosynthesis</keyword>
<keyword id="KW-0511">Multifunctional enzyme</keyword>
<keyword id="KW-0596">Phosphopantetheine</keyword>
<keyword id="KW-0597">Phosphoprotein</keyword>
<keyword id="KW-0677">Repeat</keyword>
<keyword id="KW-0808">Transferase</keyword>
<feature type="chain" id="PRO_0000461600" description="Spectinabilin polyketide synthase system protein NorC">
    <location>
        <begin position="1"/>
        <end position="2266"/>
    </location>
</feature>
<feature type="domain" description="Ketosynthase family 3 (KS3) 1" evidence="3">
    <location>
        <begin position="42"/>
        <end position="334"/>
    </location>
</feature>
<feature type="domain" description="Malonyl-CoA:ACP transacylase (MAT)" evidence="1">
    <location>
        <begin position="578"/>
        <end position="895"/>
    </location>
</feature>
<feature type="domain" description="Carrier 1" evidence="2">
    <location>
        <begin position="963"/>
        <end position="1045"/>
    </location>
</feature>
<feature type="domain" description="Ketosynthase family 3 (KS3) 2" evidence="3">
    <location>
        <begin position="1063"/>
        <end position="1489"/>
    </location>
</feature>
<feature type="domain" description="Carrier 2" evidence="2">
    <location>
        <begin position="1897"/>
        <end position="1972"/>
    </location>
</feature>
<feature type="region of interest" description="Disordered" evidence="4">
    <location>
        <begin position="340"/>
        <end position="492"/>
    </location>
</feature>
<feature type="region of interest" description="Disordered" evidence="4">
    <location>
        <begin position="925"/>
        <end position="951"/>
    </location>
</feature>
<feature type="region of interest" description="Thioesterase (TE) domain" evidence="1">
    <location>
        <begin position="2045"/>
        <end position="2257"/>
    </location>
</feature>
<feature type="compositionally biased region" description="Gly residues" evidence="4">
    <location>
        <begin position="340"/>
        <end position="349"/>
    </location>
</feature>
<feature type="compositionally biased region" description="Basic residues" evidence="4">
    <location>
        <begin position="452"/>
        <end position="461"/>
    </location>
</feature>
<feature type="compositionally biased region" description="Low complexity" evidence="4">
    <location>
        <begin position="479"/>
        <end position="492"/>
    </location>
</feature>
<feature type="compositionally biased region" description="Low complexity" evidence="4">
    <location>
        <begin position="932"/>
        <end position="946"/>
    </location>
</feature>
<feature type="active site" description="For beta-ketoacyl synthase activity" evidence="3">
    <location>
        <position position="1236"/>
    </location>
</feature>
<feature type="active site" description="For beta-ketoacyl synthase activity" evidence="3">
    <location>
        <position position="1371"/>
    </location>
</feature>
<feature type="active site" description="For beta-ketoacyl synthase activity" evidence="3">
    <location>
        <position position="1411"/>
    </location>
</feature>
<feature type="modified residue" description="O-(pantetheine 4'-phosphoryl)serine" evidence="2">
    <location>
        <position position="1005"/>
    </location>
</feature>
<feature type="modified residue" description="O-(pantetheine 4'-phosphoryl)serine" evidence="2">
    <location>
        <position position="1932"/>
    </location>
</feature>
<proteinExistence type="evidence at protein level"/>
<protein>
    <recommendedName>
        <fullName evidence="7">Spectinabilin polyketide synthase system protein NorC</fullName>
        <shortName evidence="7">Spectinabilin PKS system protein NorC</shortName>
        <ecNumber evidence="8">2.3.1.290</ecNumber>
    </recommendedName>
    <alternativeName>
        <fullName evidence="9">Modular polyketide synthase NorC</fullName>
    </alternativeName>
</protein>
<reference evidence="9" key="1">
    <citation type="journal article" date="2007" name="ChemBioChem">
        <title>Non-colinear polyketide biosynthesis in the aureothin and neoaureothin pathways: an evolutionary perspective.</title>
        <authorList>
            <person name="Traitcheva N."/>
            <person name="Jenke-Kodama H."/>
            <person name="He J."/>
            <person name="Dittmann E."/>
            <person name="Hertweck C."/>
        </authorList>
    </citation>
    <scope>NUCLEOTIDE SEQUENCE [GENOMIC DNA]</scope>
    <scope>FUNCTION</scope>
    <scope>SUBUNIT</scope>
    <source>
        <strain>HKI-0260</strain>
    </source>
</reference>